<evidence type="ECO:0000255" key="1">
    <source>
        <dbReference type="HAMAP-Rule" id="MF_01588"/>
    </source>
</evidence>
<sequence length="691" mass="75500">MARTQAEPPASQPDVRAAWLRDQLERANYAYYVLDQPDLPDAEYDRLFRELQQLESDHPDLVTPDSPTQRVGGAVASGFTPVVHDAPMLSLNNGFADDDIVAFDKRVADALGKTTDLAGSVTDPVEYACELKFDGLAISLRYEHGVFVQASTRGDGTTGEDVTENVRTIRSIPLKLKGDRVPAVLDVRGEVLMFKRDFARLNERQRAAEQREFANPRNAAAGSLRQLDPKITAQRPLSFFAYGIGVLDGMPMPDTHSALLDWYEALGLPVNRERAVVYGAQGLLDFFRKVGEKRESLPYDIDGVVYKVNRRDEQDRLGFVSRAPRFALAHKFPAQEALTKLVAIGVQVGRTGAITPVARLEPVFVGGATVTNATLHNEDEVRRKDIRIGDTVIVRRAGDVIPEVVGAVLDRRPADAAEFVMPTECPVCGSKIERLPDEAIARCTGGLFCPAQRKQALWHFAQRRALDIDGLGEKIIDQLVELNLVRTPADLFNLGFATLAELDRFAEKSAQNLLDSLEKAKHTTLARFIYALGIRHVGESTAKDLAKHFGSLDPIMNATIDELLEVNDVGPIVAESIHQFFAEEHNRTVIEQLRAPGKVTWPEGPPAPKAPQGVLAGKTVVLTGTLPNLTRDDAKEMLEAAGAKVAGSVSKKTDYVIAGAEAGSKLAKAEALGIPVLDEDGLHQLLEGNTR</sequence>
<proteinExistence type="inferred from homology"/>
<protein>
    <recommendedName>
        <fullName evidence="1">DNA ligase</fullName>
        <ecNumber evidence="1">6.5.1.2</ecNumber>
    </recommendedName>
    <alternativeName>
        <fullName evidence="1">Polydeoxyribonucleotide synthase [NAD(+)]</fullName>
    </alternativeName>
</protein>
<organism>
    <name type="scientific">Burkholderia multivorans (strain ATCC 17616 / 249)</name>
    <dbReference type="NCBI Taxonomy" id="395019"/>
    <lineage>
        <taxon>Bacteria</taxon>
        <taxon>Pseudomonadati</taxon>
        <taxon>Pseudomonadota</taxon>
        <taxon>Betaproteobacteria</taxon>
        <taxon>Burkholderiales</taxon>
        <taxon>Burkholderiaceae</taxon>
        <taxon>Burkholderia</taxon>
        <taxon>Burkholderia cepacia complex</taxon>
    </lineage>
</organism>
<reference key="1">
    <citation type="submission" date="2007-10" db="EMBL/GenBank/DDBJ databases">
        <title>Complete sequence of chromosome 1 of Burkholderia multivorans ATCC 17616.</title>
        <authorList>
            <person name="Copeland A."/>
            <person name="Lucas S."/>
            <person name="Lapidus A."/>
            <person name="Barry K."/>
            <person name="Glavina del Rio T."/>
            <person name="Dalin E."/>
            <person name="Tice H."/>
            <person name="Pitluck S."/>
            <person name="Chain P."/>
            <person name="Malfatti S."/>
            <person name="Shin M."/>
            <person name="Vergez L."/>
            <person name="Schmutz J."/>
            <person name="Larimer F."/>
            <person name="Land M."/>
            <person name="Hauser L."/>
            <person name="Kyrpides N."/>
            <person name="Kim E."/>
            <person name="Tiedje J."/>
            <person name="Richardson P."/>
        </authorList>
    </citation>
    <scope>NUCLEOTIDE SEQUENCE [LARGE SCALE GENOMIC DNA]</scope>
    <source>
        <strain>ATCC 17616 / 249</strain>
    </source>
</reference>
<reference key="2">
    <citation type="submission" date="2007-04" db="EMBL/GenBank/DDBJ databases">
        <title>Complete genome sequence of Burkholderia multivorans ATCC 17616.</title>
        <authorList>
            <person name="Ohtsubo Y."/>
            <person name="Yamashita A."/>
            <person name="Kurokawa K."/>
            <person name="Takami H."/>
            <person name="Yuhara S."/>
            <person name="Nishiyama E."/>
            <person name="Endo R."/>
            <person name="Miyazaki R."/>
            <person name="Ono A."/>
            <person name="Yano K."/>
            <person name="Ito M."/>
            <person name="Sota M."/>
            <person name="Yuji N."/>
            <person name="Hattori M."/>
            <person name="Tsuda M."/>
        </authorList>
    </citation>
    <scope>NUCLEOTIDE SEQUENCE [LARGE SCALE GENOMIC DNA]</scope>
    <source>
        <strain>ATCC 17616 / 249</strain>
    </source>
</reference>
<comment type="function">
    <text evidence="1">DNA ligase that catalyzes the formation of phosphodiester linkages between 5'-phosphoryl and 3'-hydroxyl groups in double-stranded DNA using NAD as a coenzyme and as the energy source for the reaction. It is essential for DNA replication and repair of damaged DNA.</text>
</comment>
<comment type="catalytic activity">
    <reaction evidence="1">
        <text>NAD(+) + (deoxyribonucleotide)n-3'-hydroxyl + 5'-phospho-(deoxyribonucleotide)m = (deoxyribonucleotide)n+m + AMP + beta-nicotinamide D-nucleotide.</text>
        <dbReference type="EC" id="6.5.1.2"/>
    </reaction>
</comment>
<comment type="cofactor">
    <cofactor evidence="1">
        <name>Mg(2+)</name>
        <dbReference type="ChEBI" id="CHEBI:18420"/>
    </cofactor>
    <cofactor evidence="1">
        <name>Mn(2+)</name>
        <dbReference type="ChEBI" id="CHEBI:29035"/>
    </cofactor>
</comment>
<comment type="similarity">
    <text evidence="1">Belongs to the NAD-dependent DNA ligase family. LigA subfamily.</text>
</comment>
<feature type="chain" id="PRO_0000380325" description="DNA ligase">
    <location>
        <begin position="1"/>
        <end position="691"/>
    </location>
</feature>
<feature type="domain" description="BRCT" evidence="1">
    <location>
        <begin position="610"/>
        <end position="691"/>
    </location>
</feature>
<feature type="active site" description="N6-AMP-lysine intermediate" evidence="1">
    <location>
        <position position="132"/>
    </location>
</feature>
<feature type="binding site" evidence="1">
    <location>
        <begin position="41"/>
        <end position="45"/>
    </location>
    <ligand>
        <name>NAD(+)</name>
        <dbReference type="ChEBI" id="CHEBI:57540"/>
    </ligand>
</feature>
<feature type="binding site" evidence="1">
    <location>
        <begin position="90"/>
        <end position="91"/>
    </location>
    <ligand>
        <name>NAD(+)</name>
        <dbReference type="ChEBI" id="CHEBI:57540"/>
    </ligand>
</feature>
<feature type="binding site" evidence="1">
    <location>
        <position position="130"/>
    </location>
    <ligand>
        <name>NAD(+)</name>
        <dbReference type="ChEBI" id="CHEBI:57540"/>
    </ligand>
</feature>
<feature type="binding site" evidence="1">
    <location>
        <position position="153"/>
    </location>
    <ligand>
        <name>NAD(+)</name>
        <dbReference type="ChEBI" id="CHEBI:57540"/>
    </ligand>
</feature>
<feature type="binding site" evidence="1">
    <location>
        <position position="190"/>
    </location>
    <ligand>
        <name>NAD(+)</name>
        <dbReference type="ChEBI" id="CHEBI:57540"/>
    </ligand>
</feature>
<feature type="binding site" evidence="1">
    <location>
        <position position="307"/>
    </location>
    <ligand>
        <name>NAD(+)</name>
        <dbReference type="ChEBI" id="CHEBI:57540"/>
    </ligand>
</feature>
<feature type="binding site" evidence="1">
    <location>
        <position position="331"/>
    </location>
    <ligand>
        <name>NAD(+)</name>
        <dbReference type="ChEBI" id="CHEBI:57540"/>
    </ligand>
</feature>
<feature type="binding site" evidence="1">
    <location>
        <position position="425"/>
    </location>
    <ligand>
        <name>Zn(2+)</name>
        <dbReference type="ChEBI" id="CHEBI:29105"/>
    </ligand>
</feature>
<feature type="binding site" evidence="1">
    <location>
        <position position="428"/>
    </location>
    <ligand>
        <name>Zn(2+)</name>
        <dbReference type="ChEBI" id="CHEBI:29105"/>
    </ligand>
</feature>
<feature type="binding site" evidence="1">
    <location>
        <position position="443"/>
    </location>
    <ligand>
        <name>Zn(2+)</name>
        <dbReference type="ChEBI" id="CHEBI:29105"/>
    </ligand>
</feature>
<feature type="binding site" evidence="1">
    <location>
        <position position="449"/>
    </location>
    <ligand>
        <name>Zn(2+)</name>
        <dbReference type="ChEBI" id="CHEBI:29105"/>
    </ligand>
</feature>
<keyword id="KW-0227">DNA damage</keyword>
<keyword id="KW-0234">DNA repair</keyword>
<keyword id="KW-0235">DNA replication</keyword>
<keyword id="KW-0436">Ligase</keyword>
<keyword id="KW-0460">Magnesium</keyword>
<keyword id="KW-0464">Manganese</keyword>
<keyword id="KW-0479">Metal-binding</keyword>
<keyword id="KW-0520">NAD</keyword>
<keyword id="KW-1185">Reference proteome</keyword>
<keyword id="KW-0862">Zinc</keyword>
<dbReference type="EC" id="6.5.1.2" evidence="1"/>
<dbReference type="EMBL" id="CP000868">
    <property type="protein sequence ID" value="ABX14940.1"/>
    <property type="molecule type" value="Genomic_DNA"/>
</dbReference>
<dbReference type="EMBL" id="AP009385">
    <property type="protein sequence ID" value="BAG43912.1"/>
    <property type="molecule type" value="Genomic_DNA"/>
</dbReference>
<dbReference type="RefSeq" id="WP_012213133.1">
    <property type="nucleotide sequence ID" value="NC_010084.1"/>
</dbReference>
<dbReference type="SMR" id="A9AIK9"/>
<dbReference type="STRING" id="395019.BMULJ_01995"/>
<dbReference type="KEGG" id="bmj:BMULJ_01995"/>
<dbReference type="KEGG" id="bmu:Bmul_1252"/>
<dbReference type="eggNOG" id="COG0272">
    <property type="taxonomic scope" value="Bacteria"/>
</dbReference>
<dbReference type="HOGENOM" id="CLU_007764_2_1_4"/>
<dbReference type="Proteomes" id="UP000008815">
    <property type="component" value="Chromosome 1"/>
</dbReference>
<dbReference type="GO" id="GO:0005829">
    <property type="term" value="C:cytosol"/>
    <property type="evidence" value="ECO:0007669"/>
    <property type="project" value="TreeGrafter"/>
</dbReference>
<dbReference type="GO" id="GO:0003677">
    <property type="term" value="F:DNA binding"/>
    <property type="evidence" value="ECO:0007669"/>
    <property type="project" value="InterPro"/>
</dbReference>
<dbReference type="GO" id="GO:0003911">
    <property type="term" value="F:DNA ligase (NAD+) activity"/>
    <property type="evidence" value="ECO:0007669"/>
    <property type="project" value="UniProtKB-UniRule"/>
</dbReference>
<dbReference type="GO" id="GO:0046872">
    <property type="term" value="F:metal ion binding"/>
    <property type="evidence" value="ECO:0007669"/>
    <property type="project" value="UniProtKB-KW"/>
</dbReference>
<dbReference type="GO" id="GO:0006281">
    <property type="term" value="P:DNA repair"/>
    <property type="evidence" value="ECO:0007669"/>
    <property type="project" value="UniProtKB-KW"/>
</dbReference>
<dbReference type="GO" id="GO:0006260">
    <property type="term" value="P:DNA replication"/>
    <property type="evidence" value="ECO:0007669"/>
    <property type="project" value="UniProtKB-KW"/>
</dbReference>
<dbReference type="CDD" id="cd17748">
    <property type="entry name" value="BRCT_DNA_ligase_like"/>
    <property type="match status" value="1"/>
</dbReference>
<dbReference type="CDD" id="cd00114">
    <property type="entry name" value="LIGANc"/>
    <property type="match status" value="1"/>
</dbReference>
<dbReference type="FunFam" id="1.10.150.20:FF:000006">
    <property type="entry name" value="DNA ligase"/>
    <property type="match status" value="1"/>
</dbReference>
<dbReference type="FunFam" id="1.10.150.20:FF:000007">
    <property type="entry name" value="DNA ligase"/>
    <property type="match status" value="1"/>
</dbReference>
<dbReference type="FunFam" id="1.10.287.610:FF:000002">
    <property type="entry name" value="DNA ligase"/>
    <property type="match status" value="1"/>
</dbReference>
<dbReference type="FunFam" id="2.40.50.140:FF:000012">
    <property type="entry name" value="DNA ligase"/>
    <property type="match status" value="1"/>
</dbReference>
<dbReference type="FunFam" id="3.30.470.30:FF:000001">
    <property type="entry name" value="DNA ligase"/>
    <property type="match status" value="1"/>
</dbReference>
<dbReference type="FunFam" id="3.40.50.10190:FF:000054">
    <property type="entry name" value="DNA ligase"/>
    <property type="match status" value="1"/>
</dbReference>
<dbReference type="Gene3D" id="6.20.10.30">
    <property type="match status" value="1"/>
</dbReference>
<dbReference type="Gene3D" id="1.10.150.20">
    <property type="entry name" value="5' to 3' exonuclease, C-terminal subdomain"/>
    <property type="match status" value="2"/>
</dbReference>
<dbReference type="Gene3D" id="3.40.50.10190">
    <property type="entry name" value="BRCT domain"/>
    <property type="match status" value="1"/>
</dbReference>
<dbReference type="Gene3D" id="3.30.470.30">
    <property type="entry name" value="DNA ligase/mRNA capping enzyme"/>
    <property type="match status" value="1"/>
</dbReference>
<dbReference type="Gene3D" id="1.10.287.610">
    <property type="entry name" value="Helix hairpin bin"/>
    <property type="match status" value="1"/>
</dbReference>
<dbReference type="Gene3D" id="2.40.50.140">
    <property type="entry name" value="Nucleic acid-binding proteins"/>
    <property type="match status" value="1"/>
</dbReference>
<dbReference type="HAMAP" id="MF_01588">
    <property type="entry name" value="DNA_ligase_A"/>
    <property type="match status" value="1"/>
</dbReference>
<dbReference type="InterPro" id="IPR001357">
    <property type="entry name" value="BRCT_dom"/>
</dbReference>
<dbReference type="InterPro" id="IPR036420">
    <property type="entry name" value="BRCT_dom_sf"/>
</dbReference>
<dbReference type="InterPro" id="IPR041663">
    <property type="entry name" value="DisA/LigA_HHH"/>
</dbReference>
<dbReference type="InterPro" id="IPR001679">
    <property type="entry name" value="DNA_ligase"/>
</dbReference>
<dbReference type="InterPro" id="IPR018239">
    <property type="entry name" value="DNA_ligase_AS"/>
</dbReference>
<dbReference type="InterPro" id="IPR033136">
    <property type="entry name" value="DNA_ligase_CS"/>
</dbReference>
<dbReference type="InterPro" id="IPR013839">
    <property type="entry name" value="DNAligase_adenylation"/>
</dbReference>
<dbReference type="InterPro" id="IPR013840">
    <property type="entry name" value="DNAligase_N"/>
</dbReference>
<dbReference type="InterPro" id="IPR003583">
    <property type="entry name" value="Hlx-hairpin-Hlx_DNA-bd_motif"/>
</dbReference>
<dbReference type="InterPro" id="IPR012340">
    <property type="entry name" value="NA-bd_OB-fold"/>
</dbReference>
<dbReference type="InterPro" id="IPR004150">
    <property type="entry name" value="NAD_DNA_ligase_OB"/>
</dbReference>
<dbReference type="InterPro" id="IPR010994">
    <property type="entry name" value="RuvA_2-like"/>
</dbReference>
<dbReference type="InterPro" id="IPR004149">
    <property type="entry name" value="Znf_DNAligase_C4"/>
</dbReference>
<dbReference type="NCBIfam" id="TIGR00575">
    <property type="entry name" value="dnlj"/>
    <property type="match status" value="1"/>
</dbReference>
<dbReference type="NCBIfam" id="NF005932">
    <property type="entry name" value="PRK07956.1"/>
    <property type="match status" value="1"/>
</dbReference>
<dbReference type="PANTHER" id="PTHR23389">
    <property type="entry name" value="CHROMOSOME TRANSMISSION FIDELITY FACTOR 18"/>
    <property type="match status" value="1"/>
</dbReference>
<dbReference type="PANTHER" id="PTHR23389:SF9">
    <property type="entry name" value="DNA LIGASE"/>
    <property type="match status" value="1"/>
</dbReference>
<dbReference type="Pfam" id="PF00533">
    <property type="entry name" value="BRCT"/>
    <property type="match status" value="1"/>
</dbReference>
<dbReference type="Pfam" id="PF01653">
    <property type="entry name" value="DNA_ligase_aden"/>
    <property type="match status" value="1"/>
</dbReference>
<dbReference type="Pfam" id="PF03120">
    <property type="entry name" value="DNA_ligase_OB"/>
    <property type="match status" value="1"/>
</dbReference>
<dbReference type="Pfam" id="PF03119">
    <property type="entry name" value="DNA_ligase_ZBD"/>
    <property type="match status" value="1"/>
</dbReference>
<dbReference type="Pfam" id="PF12826">
    <property type="entry name" value="HHH_2"/>
    <property type="match status" value="1"/>
</dbReference>
<dbReference type="Pfam" id="PF14520">
    <property type="entry name" value="HHH_5"/>
    <property type="match status" value="1"/>
</dbReference>
<dbReference type="Pfam" id="PF22745">
    <property type="entry name" value="Nlig-Ia"/>
    <property type="match status" value="1"/>
</dbReference>
<dbReference type="PIRSF" id="PIRSF001604">
    <property type="entry name" value="LigA"/>
    <property type="match status" value="1"/>
</dbReference>
<dbReference type="SMART" id="SM00292">
    <property type="entry name" value="BRCT"/>
    <property type="match status" value="1"/>
</dbReference>
<dbReference type="SMART" id="SM00278">
    <property type="entry name" value="HhH1"/>
    <property type="match status" value="4"/>
</dbReference>
<dbReference type="SMART" id="SM00532">
    <property type="entry name" value="LIGANc"/>
    <property type="match status" value="1"/>
</dbReference>
<dbReference type="SUPFAM" id="SSF52113">
    <property type="entry name" value="BRCT domain"/>
    <property type="match status" value="1"/>
</dbReference>
<dbReference type="SUPFAM" id="SSF56091">
    <property type="entry name" value="DNA ligase/mRNA capping enzyme, catalytic domain"/>
    <property type="match status" value="1"/>
</dbReference>
<dbReference type="SUPFAM" id="SSF50249">
    <property type="entry name" value="Nucleic acid-binding proteins"/>
    <property type="match status" value="1"/>
</dbReference>
<dbReference type="SUPFAM" id="SSF47781">
    <property type="entry name" value="RuvA domain 2-like"/>
    <property type="match status" value="1"/>
</dbReference>
<dbReference type="PROSITE" id="PS50172">
    <property type="entry name" value="BRCT"/>
    <property type="match status" value="1"/>
</dbReference>
<dbReference type="PROSITE" id="PS01055">
    <property type="entry name" value="DNA_LIGASE_N1"/>
    <property type="match status" value="1"/>
</dbReference>
<dbReference type="PROSITE" id="PS01056">
    <property type="entry name" value="DNA_LIGASE_N2"/>
    <property type="match status" value="1"/>
</dbReference>
<name>DNLJ_BURM1</name>
<gene>
    <name evidence="1" type="primary">ligA</name>
    <name type="ordered locus">Bmul_1252</name>
    <name type="ordered locus">BMULJ_01995</name>
</gene>
<accession>A9AIK9</accession>